<gene>
    <name evidence="1" type="primary">dapD</name>
    <name type="ordered locus">SbBS512_E0158</name>
</gene>
<protein>
    <recommendedName>
        <fullName evidence="1">2,3,4,5-tetrahydropyridine-2,6-dicarboxylate N-succinyltransferase</fullName>
        <ecNumber evidence="1">2.3.1.117</ecNumber>
    </recommendedName>
    <alternativeName>
        <fullName evidence="1">Tetrahydrodipicolinate N-succinyltransferase</fullName>
        <shortName evidence="1">THP succinyltransferase</shortName>
        <shortName evidence="1">Tetrahydropicolinate succinylase</shortName>
    </alternativeName>
</protein>
<proteinExistence type="inferred from homology"/>
<name>DAPD_SHIB3</name>
<comment type="catalytic activity">
    <reaction evidence="1">
        <text>(S)-2,3,4,5-tetrahydrodipicolinate + succinyl-CoA + H2O = (S)-2-succinylamino-6-oxoheptanedioate + CoA</text>
        <dbReference type="Rhea" id="RHEA:17325"/>
        <dbReference type="ChEBI" id="CHEBI:15377"/>
        <dbReference type="ChEBI" id="CHEBI:15685"/>
        <dbReference type="ChEBI" id="CHEBI:16845"/>
        <dbReference type="ChEBI" id="CHEBI:57287"/>
        <dbReference type="ChEBI" id="CHEBI:57292"/>
        <dbReference type="EC" id="2.3.1.117"/>
    </reaction>
</comment>
<comment type="pathway">
    <text evidence="1">Amino-acid biosynthesis; L-lysine biosynthesis via DAP pathway; LL-2,6-diaminopimelate from (S)-tetrahydrodipicolinate (succinylase route): step 1/3.</text>
</comment>
<comment type="subcellular location">
    <subcellularLocation>
        <location evidence="1">Cytoplasm</location>
    </subcellularLocation>
</comment>
<comment type="similarity">
    <text evidence="1">Belongs to the transferase hexapeptide repeat family.</text>
</comment>
<evidence type="ECO:0000255" key="1">
    <source>
        <dbReference type="HAMAP-Rule" id="MF_00811"/>
    </source>
</evidence>
<dbReference type="EC" id="2.3.1.117" evidence="1"/>
<dbReference type="EMBL" id="CP001063">
    <property type="protein sequence ID" value="ACD06702.1"/>
    <property type="molecule type" value="Genomic_DNA"/>
</dbReference>
<dbReference type="RefSeq" id="WP_001186662.1">
    <property type="nucleotide sequence ID" value="NC_010658.1"/>
</dbReference>
<dbReference type="SMR" id="B2U308"/>
<dbReference type="STRING" id="344609.SbBS512_E0158"/>
<dbReference type="KEGG" id="sbc:SbBS512_E0158"/>
<dbReference type="HOGENOM" id="CLU_050859_0_1_6"/>
<dbReference type="UniPathway" id="UPA00034">
    <property type="reaction ID" value="UER00019"/>
</dbReference>
<dbReference type="Proteomes" id="UP000001030">
    <property type="component" value="Chromosome"/>
</dbReference>
<dbReference type="GO" id="GO:0005737">
    <property type="term" value="C:cytoplasm"/>
    <property type="evidence" value="ECO:0007669"/>
    <property type="project" value="UniProtKB-SubCell"/>
</dbReference>
<dbReference type="GO" id="GO:0008666">
    <property type="term" value="F:2,3,4,5-tetrahydropyridine-2,6-dicarboxylate N-succinyltransferase activity"/>
    <property type="evidence" value="ECO:0007669"/>
    <property type="project" value="UniProtKB-UniRule"/>
</dbReference>
<dbReference type="GO" id="GO:0016779">
    <property type="term" value="F:nucleotidyltransferase activity"/>
    <property type="evidence" value="ECO:0007669"/>
    <property type="project" value="TreeGrafter"/>
</dbReference>
<dbReference type="GO" id="GO:0019877">
    <property type="term" value="P:diaminopimelate biosynthetic process"/>
    <property type="evidence" value="ECO:0007669"/>
    <property type="project" value="UniProtKB-UniRule"/>
</dbReference>
<dbReference type="GO" id="GO:0009089">
    <property type="term" value="P:lysine biosynthetic process via diaminopimelate"/>
    <property type="evidence" value="ECO:0007669"/>
    <property type="project" value="UniProtKB-UniRule"/>
</dbReference>
<dbReference type="CDD" id="cd03350">
    <property type="entry name" value="LbH_THP_succinylT"/>
    <property type="match status" value="1"/>
</dbReference>
<dbReference type="FunFam" id="1.10.166.10:FF:000001">
    <property type="entry name" value="2,3,4,5-tetrahydropyridine-2,6-dicarboxylate N-succinyltransferase"/>
    <property type="match status" value="1"/>
</dbReference>
<dbReference type="FunFam" id="2.160.10.10:FF:000004">
    <property type="entry name" value="2,3,4,5-tetrahydropyridine-2,6-dicarboxylate N-succinyltransferase"/>
    <property type="match status" value="1"/>
</dbReference>
<dbReference type="Gene3D" id="2.160.10.10">
    <property type="entry name" value="Hexapeptide repeat proteins"/>
    <property type="match status" value="1"/>
</dbReference>
<dbReference type="Gene3D" id="1.10.166.10">
    <property type="entry name" value="Tetrahydrodipicolinate-N-succinyltransferase, N-terminal domain"/>
    <property type="match status" value="1"/>
</dbReference>
<dbReference type="HAMAP" id="MF_00811">
    <property type="entry name" value="DapD"/>
    <property type="match status" value="1"/>
</dbReference>
<dbReference type="InterPro" id="IPR005664">
    <property type="entry name" value="DapD_Trfase_Hexpep_rpt_fam"/>
</dbReference>
<dbReference type="InterPro" id="IPR001451">
    <property type="entry name" value="Hexapep"/>
</dbReference>
<dbReference type="InterPro" id="IPR018357">
    <property type="entry name" value="Hexapep_transf_CS"/>
</dbReference>
<dbReference type="InterPro" id="IPR023180">
    <property type="entry name" value="THP_succinylTrfase_dom1"/>
</dbReference>
<dbReference type="InterPro" id="IPR037133">
    <property type="entry name" value="THP_succinylTrfase_N_sf"/>
</dbReference>
<dbReference type="InterPro" id="IPR011004">
    <property type="entry name" value="Trimer_LpxA-like_sf"/>
</dbReference>
<dbReference type="NCBIfam" id="TIGR00965">
    <property type="entry name" value="dapD"/>
    <property type="match status" value="1"/>
</dbReference>
<dbReference type="NCBIfam" id="NF008808">
    <property type="entry name" value="PRK11830.1"/>
    <property type="match status" value="1"/>
</dbReference>
<dbReference type="PANTHER" id="PTHR19136:SF52">
    <property type="entry name" value="2,3,4,5-TETRAHYDROPYRIDINE-2,6-DICARBOXYLATE N-SUCCINYLTRANSFERASE"/>
    <property type="match status" value="1"/>
</dbReference>
<dbReference type="PANTHER" id="PTHR19136">
    <property type="entry name" value="MOLYBDENUM COFACTOR GUANYLYLTRANSFERASE"/>
    <property type="match status" value="1"/>
</dbReference>
<dbReference type="Pfam" id="PF14602">
    <property type="entry name" value="Hexapep_2"/>
    <property type="match status" value="1"/>
</dbReference>
<dbReference type="Pfam" id="PF14805">
    <property type="entry name" value="THDPS_N_2"/>
    <property type="match status" value="1"/>
</dbReference>
<dbReference type="SUPFAM" id="SSF51161">
    <property type="entry name" value="Trimeric LpxA-like enzymes"/>
    <property type="match status" value="1"/>
</dbReference>
<dbReference type="PROSITE" id="PS00101">
    <property type="entry name" value="HEXAPEP_TRANSFERASES"/>
    <property type="match status" value="1"/>
</dbReference>
<sequence length="274" mass="29908">MQQLQNIIETAFERRAEITPANADTVTREAVNQVISLLDSGALRVAEKIDGQWVTHQWLKKAVLLSFRINDNQVIEGAESRYFDKVPMKFADYDEARFQKEGFRVVPPAAVRQGAFIARNTVLMPSYVNIGAYVDEGTMVDTWATVGSCAQIGKNVHLSGGVGIGGVLEPLQANPTIIEDNCFIGARSEVVEGVIVEEGSVISMGVYIGQSTRIYDRETGEIHYGRVPAGSVVVSGNLPSKDGKYSLYCAVIVKKVDAKTRGKVGINELLRTID</sequence>
<accession>B2U308</accession>
<organism>
    <name type="scientific">Shigella boydii serotype 18 (strain CDC 3083-94 / BS512)</name>
    <dbReference type="NCBI Taxonomy" id="344609"/>
    <lineage>
        <taxon>Bacteria</taxon>
        <taxon>Pseudomonadati</taxon>
        <taxon>Pseudomonadota</taxon>
        <taxon>Gammaproteobacteria</taxon>
        <taxon>Enterobacterales</taxon>
        <taxon>Enterobacteriaceae</taxon>
        <taxon>Shigella</taxon>
    </lineage>
</organism>
<keyword id="KW-0012">Acyltransferase</keyword>
<keyword id="KW-0028">Amino-acid biosynthesis</keyword>
<keyword id="KW-0963">Cytoplasm</keyword>
<keyword id="KW-0220">Diaminopimelate biosynthesis</keyword>
<keyword id="KW-0457">Lysine biosynthesis</keyword>
<keyword id="KW-1185">Reference proteome</keyword>
<keyword id="KW-0677">Repeat</keyword>
<keyword id="KW-0808">Transferase</keyword>
<feature type="chain" id="PRO_1000134071" description="2,3,4,5-tetrahydropyridine-2,6-dicarboxylate N-succinyltransferase">
    <location>
        <begin position="1"/>
        <end position="274"/>
    </location>
</feature>
<reference key="1">
    <citation type="submission" date="2008-05" db="EMBL/GenBank/DDBJ databases">
        <title>Complete sequence of Shigella boydii serotype 18 strain BS512.</title>
        <authorList>
            <person name="Rasko D.A."/>
            <person name="Rosovitz M."/>
            <person name="Maurelli A.T."/>
            <person name="Myers G."/>
            <person name="Seshadri R."/>
            <person name="Cer R."/>
            <person name="Jiang L."/>
            <person name="Ravel J."/>
            <person name="Sebastian Y."/>
        </authorList>
    </citation>
    <scope>NUCLEOTIDE SEQUENCE [LARGE SCALE GENOMIC DNA]</scope>
    <source>
        <strain>CDC 3083-94 / BS512</strain>
    </source>
</reference>